<reference key="1">
    <citation type="journal article" date="2010" name="J. Bacteriol.">
        <title>Complete genome sequence of Methanothermobacter marburgensis, a methanoarchaeon model organism.</title>
        <authorList>
            <person name="Liesegang H."/>
            <person name="Kaster A.K."/>
            <person name="Wiezer A."/>
            <person name="Goenrich M."/>
            <person name="Wollherr A."/>
            <person name="Seedorf H."/>
            <person name="Gottschalk G."/>
            <person name="Thauer R.K."/>
        </authorList>
    </citation>
    <scope>NUCLEOTIDE SEQUENCE [LARGE SCALE GENOMIC DNA]</scope>
    <source>
        <strain>ATCC BAA-927 / DSM 2133 / JCM 14651 / NBRC 100331 / OCM 82 / Marburg</strain>
    </source>
</reference>
<reference key="2">
    <citation type="journal article" date="1997" name="Eur. J. Biochem.">
        <title>Structures and functions of four anabolic 2-oxoacid oxidoreductases in Methanobacterium thermoautotrophicum.</title>
        <authorList>
            <person name="Tersteegen A."/>
            <person name="Linder D."/>
            <person name="Thauer R.K."/>
            <person name="Hedderich R."/>
        </authorList>
    </citation>
    <scope>PROTEIN SEQUENCE OF 1-12</scope>
    <scope>BIOPHYSICOCHEMICAL PROPERTIES</scope>
    <scope>SUBUNIT</scope>
    <source>
        <strain>ATCC BAA-927 / DSM 2133 / JCM 14651 / NBRC 100331 / OCM 82 / Marburg</strain>
    </source>
</reference>
<protein>
    <recommendedName>
        <fullName>Pyruvate synthase subunit PorD</fullName>
    </recommendedName>
    <alternativeName>
        <fullName>Pyruvate oxidoreductase delta chain</fullName>
        <shortName>POR</shortName>
    </alternativeName>
    <alternativeName>
        <fullName>Pyruvic-ferredoxin oxidoreductase subunit delta</fullName>
    </alternativeName>
</protein>
<keyword id="KW-0004">4Fe-4S</keyword>
<keyword id="KW-0903">Direct protein sequencing</keyword>
<keyword id="KW-0249">Electron transport</keyword>
<keyword id="KW-0408">Iron</keyword>
<keyword id="KW-0411">Iron-sulfur</keyword>
<keyword id="KW-0479">Metal-binding</keyword>
<keyword id="KW-0677">Repeat</keyword>
<keyword id="KW-0813">Transport</keyword>
<accession>P80903</accession>
<accession>D9PUM3</accession>
<feature type="chain" id="PRO_0000099920" description="Pyruvate synthase subunit PorD">
    <location>
        <begin position="1"/>
        <end position="81"/>
    </location>
</feature>
<feature type="domain" description="4Fe-4S ferredoxin-type 1" evidence="2">
    <location>
        <begin position="25"/>
        <end position="54"/>
    </location>
</feature>
<feature type="domain" description="4Fe-4S ferredoxin-type 2" evidence="2">
    <location>
        <begin position="51"/>
        <end position="80"/>
    </location>
</feature>
<feature type="region of interest" description="Disordered" evidence="3">
    <location>
        <begin position="1"/>
        <end position="20"/>
    </location>
</feature>
<feature type="binding site" evidence="1">
    <location>
        <position position="34"/>
    </location>
    <ligand>
        <name>[4Fe-4S] cluster</name>
        <dbReference type="ChEBI" id="CHEBI:49883"/>
        <label>1</label>
    </ligand>
</feature>
<feature type="binding site" evidence="1">
    <location>
        <position position="37"/>
    </location>
    <ligand>
        <name>[4Fe-4S] cluster</name>
        <dbReference type="ChEBI" id="CHEBI:49883"/>
        <label>1</label>
    </ligand>
</feature>
<feature type="binding site" evidence="1">
    <location>
        <position position="40"/>
    </location>
    <ligand>
        <name>[4Fe-4S] cluster</name>
        <dbReference type="ChEBI" id="CHEBI:49883"/>
        <label>1</label>
    </ligand>
</feature>
<feature type="binding site" evidence="1">
    <location>
        <position position="44"/>
    </location>
    <ligand>
        <name>[4Fe-4S] cluster</name>
        <dbReference type="ChEBI" id="CHEBI:49883"/>
        <label>2</label>
    </ligand>
</feature>
<feature type="binding site" evidence="1">
    <location>
        <position position="60"/>
    </location>
    <ligand>
        <name>[4Fe-4S] cluster</name>
        <dbReference type="ChEBI" id="CHEBI:49883"/>
        <label>2</label>
    </ligand>
</feature>
<feature type="binding site" evidence="1">
    <location>
        <position position="63"/>
    </location>
    <ligand>
        <name>[4Fe-4S] cluster</name>
        <dbReference type="ChEBI" id="CHEBI:49883"/>
        <label>2</label>
    </ligand>
</feature>
<feature type="binding site" evidence="1">
    <location>
        <position position="66"/>
    </location>
    <ligand>
        <name>[4Fe-4S] cluster</name>
        <dbReference type="ChEBI" id="CHEBI:49883"/>
        <label>2</label>
    </ligand>
</feature>
<feature type="binding site" evidence="1">
    <location>
        <position position="70"/>
    </location>
    <ligand>
        <name>[4Fe-4S] cluster</name>
        <dbReference type="ChEBI" id="CHEBI:49883"/>
        <label>1</label>
    </ligand>
</feature>
<sequence length="81" mass="9201">MESLGATVKEPGSTRKNKTGSWRTFKPFLDKDKCIDCDNCILFCPEGCIDKEHEIDYDYCKGCGICAEECPVKAIKMEREK</sequence>
<gene>
    <name type="primary">porD</name>
    <name type="ordered locus">MTBMA_c03150</name>
</gene>
<name>PORD_METTM</name>
<evidence type="ECO:0000250" key="1">
    <source>
        <dbReference type="UniProtKB" id="P94692"/>
    </source>
</evidence>
<evidence type="ECO:0000255" key="2">
    <source>
        <dbReference type="PROSITE-ProRule" id="PRU00711"/>
    </source>
</evidence>
<evidence type="ECO:0000256" key="3">
    <source>
        <dbReference type="SAM" id="MobiDB-lite"/>
    </source>
</evidence>
<evidence type="ECO:0000269" key="4">
    <source>
    </source>
</evidence>
<dbReference type="EMBL" id="CP001710">
    <property type="protein sequence ID" value="ADL57921.1"/>
    <property type="molecule type" value="Genomic_DNA"/>
</dbReference>
<dbReference type="RefSeq" id="WP_013295148.1">
    <property type="nucleotide sequence ID" value="NC_014408.1"/>
</dbReference>
<dbReference type="SMR" id="P80903"/>
<dbReference type="STRING" id="79929.MTBMA_c03150"/>
<dbReference type="PaxDb" id="79929-MTBMA_c03150"/>
<dbReference type="GeneID" id="77399098"/>
<dbReference type="GeneID" id="9704021"/>
<dbReference type="KEGG" id="mmg:MTBMA_c03150"/>
<dbReference type="PATRIC" id="fig|79929.8.peg.309"/>
<dbReference type="HOGENOM" id="CLU_139698_1_1_2"/>
<dbReference type="OrthoDB" id="23478at2157"/>
<dbReference type="Proteomes" id="UP000000345">
    <property type="component" value="Chromosome"/>
</dbReference>
<dbReference type="GO" id="GO:0051539">
    <property type="term" value="F:4 iron, 4 sulfur cluster binding"/>
    <property type="evidence" value="ECO:0007669"/>
    <property type="project" value="UniProtKB-KW"/>
</dbReference>
<dbReference type="GO" id="GO:0046872">
    <property type="term" value="F:metal ion binding"/>
    <property type="evidence" value="ECO:0007669"/>
    <property type="project" value="UniProtKB-KW"/>
</dbReference>
<dbReference type="GO" id="GO:0016625">
    <property type="term" value="F:oxidoreductase activity, acting on the aldehyde or oxo group of donors, iron-sulfur protein as acceptor"/>
    <property type="evidence" value="ECO:0007669"/>
    <property type="project" value="InterPro"/>
</dbReference>
<dbReference type="Gene3D" id="3.30.70.20">
    <property type="match status" value="2"/>
</dbReference>
<dbReference type="InterPro" id="IPR017896">
    <property type="entry name" value="4Fe4S_Fe-S-bd"/>
</dbReference>
<dbReference type="InterPro" id="IPR017900">
    <property type="entry name" value="4Fe4S_Fe_S_CS"/>
</dbReference>
<dbReference type="InterPro" id="IPR011898">
    <property type="entry name" value="PorD_KorD"/>
</dbReference>
<dbReference type="InterPro" id="IPR053389">
    <property type="entry name" value="Pyruvate_synthase_PorD"/>
</dbReference>
<dbReference type="NCBIfam" id="NF040684">
    <property type="entry name" value="PorD_Arch"/>
    <property type="match status" value="1"/>
</dbReference>
<dbReference type="NCBIfam" id="TIGR02179">
    <property type="entry name" value="PorD_KorD"/>
    <property type="match status" value="1"/>
</dbReference>
<dbReference type="PANTHER" id="PTHR43724">
    <property type="entry name" value="PYRUVATE SYNTHASE SUBUNIT PORD"/>
    <property type="match status" value="1"/>
</dbReference>
<dbReference type="PANTHER" id="PTHR43724:SF1">
    <property type="entry name" value="PYRUVATE SYNTHASE SUBUNIT PORD"/>
    <property type="match status" value="1"/>
</dbReference>
<dbReference type="Pfam" id="PF14697">
    <property type="entry name" value="Fer4_21"/>
    <property type="match status" value="1"/>
</dbReference>
<dbReference type="SUPFAM" id="SSF54862">
    <property type="entry name" value="4Fe-4S ferredoxins"/>
    <property type="match status" value="1"/>
</dbReference>
<dbReference type="PROSITE" id="PS00198">
    <property type="entry name" value="4FE4S_FER_1"/>
    <property type="match status" value="2"/>
</dbReference>
<dbReference type="PROSITE" id="PS51379">
    <property type="entry name" value="4FE4S_FER_2"/>
    <property type="match status" value="2"/>
</dbReference>
<proteinExistence type="evidence at protein level"/>
<comment type="cofactor">
    <cofactor evidence="1">
        <name>[4Fe-4S] cluster</name>
        <dbReference type="ChEBI" id="CHEBI:49883"/>
    </cofactor>
    <text evidence="1">Binds 2 [4Fe-4S] clusters.</text>
</comment>
<comment type="biophysicochemical properties">
    <phDependence>
        <text evidence="4">Optimum pH is 10.0.</text>
    </phDependence>
    <temperatureDependence>
        <text evidence="4">Optimum temperature is 80 degrees Celsius.</text>
    </temperatureDependence>
</comment>
<comment type="subunit">
    <text evidence="4">Heterotetramer of one alpha, one beta, one delta and one gamma chain.</text>
</comment>
<organism>
    <name type="scientific">Methanothermobacter marburgensis (strain ATCC BAA-927 / DSM 2133 / JCM 14651 / NBRC 100331 / OCM 82 / Marburg)</name>
    <name type="common">Methanobacterium thermoautotrophicum</name>
    <dbReference type="NCBI Taxonomy" id="79929"/>
    <lineage>
        <taxon>Archaea</taxon>
        <taxon>Methanobacteriati</taxon>
        <taxon>Methanobacteriota</taxon>
        <taxon>Methanomada group</taxon>
        <taxon>Methanobacteria</taxon>
        <taxon>Methanobacteriales</taxon>
        <taxon>Methanobacteriaceae</taxon>
        <taxon>Methanothermobacter</taxon>
    </lineage>
</organism>